<gene>
    <name evidence="1" type="primary">infC</name>
    <name type="ordered locus">BUAPTUC7_125</name>
</gene>
<protein>
    <recommendedName>
        <fullName evidence="1">Translation initiation factor IF-3</fullName>
    </recommendedName>
</protein>
<reference key="1">
    <citation type="journal article" date="2009" name="Science">
        <title>The dynamics and time scale of ongoing genomic erosion in symbiotic bacteria.</title>
        <authorList>
            <person name="Moran N.A."/>
            <person name="McLaughlin H.J."/>
            <person name="Sorek R."/>
        </authorList>
    </citation>
    <scope>NUCLEOTIDE SEQUENCE [LARGE SCALE GENOMIC DNA]</scope>
    <source>
        <strain>Tuc7</strain>
    </source>
</reference>
<feature type="chain" id="PRO_1000118263" description="Translation initiation factor IF-3">
    <location>
        <begin position="1"/>
        <end position="179"/>
    </location>
</feature>
<comment type="function">
    <text evidence="1">IF-3 binds to the 30S ribosomal subunit and shifts the equilibrium between 70S ribosomes and their 50S and 30S subunits in favor of the free subunits, thus enhancing the availability of 30S subunits on which protein synthesis initiation begins.</text>
</comment>
<comment type="subunit">
    <text evidence="1">Monomer.</text>
</comment>
<comment type="subcellular location">
    <subcellularLocation>
        <location evidence="1">Cytoplasm</location>
    </subcellularLocation>
</comment>
<comment type="similarity">
    <text evidence="1">Belongs to the IF-3 family.</text>
</comment>
<dbReference type="EMBL" id="CP001158">
    <property type="protein sequence ID" value="ACL29946.1"/>
    <property type="molecule type" value="Genomic_DNA"/>
</dbReference>
<dbReference type="RefSeq" id="WP_012619374.1">
    <property type="nucleotide sequence ID" value="NC_011834.1"/>
</dbReference>
<dbReference type="SMR" id="B8D731"/>
<dbReference type="KEGG" id="bau:BUAPTUC7_125"/>
<dbReference type="HOGENOM" id="CLU_054919_3_2_6"/>
<dbReference type="GO" id="GO:0005829">
    <property type="term" value="C:cytosol"/>
    <property type="evidence" value="ECO:0007669"/>
    <property type="project" value="TreeGrafter"/>
</dbReference>
<dbReference type="GO" id="GO:0016020">
    <property type="term" value="C:membrane"/>
    <property type="evidence" value="ECO:0007669"/>
    <property type="project" value="TreeGrafter"/>
</dbReference>
<dbReference type="GO" id="GO:0043022">
    <property type="term" value="F:ribosome binding"/>
    <property type="evidence" value="ECO:0007669"/>
    <property type="project" value="TreeGrafter"/>
</dbReference>
<dbReference type="GO" id="GO:0003743">
    <property type="term" value="F:translation initiation factor activity"/>
    <property type="evidence" value="ECO:0007669"/>
    <property type="project" value="UniProtKB-UniRule"/>
</dbReference>
<dbReference type="GO" id="GO:0032790">
    <property type="term" value="P:ribosome disassembly"/>
    <property type="evidence" value="ECO:0007669"/>
    <property type="project" value="TreeGrafter"/>
</dbReference>
<dbReference type="FunFam" id="3.10.20.80:FF:000001">
    <property type="entry name" value="Translation initiation factor IF-3"/>
    <property type="match status" value="1"/>
</dbReference>
<dbReference type="FunFam" id="3.30.110.10:FF:000001">
    <property type="entry name" value="Translation initiation factor IF-3"/>
    <property type="match status" value="1"/>
</dbReference>
<dbReference type="Gene3D" id="3.30.110.10">
    <property type="entry name" value="Translation initiation factor 3 (IF-3), C-terminal domain"/>
    <property type="match status" value="1"/>
</dbReference>
<dbReference type="Gene3D" id="3.10.20.80">
    <property type="entry name" value="Translation initiation factor 3 (IF-3), N-terminal domain"/>
    <property type="match status" value="1"/>
</dbReference>
<dbReference type="HAMAP" id="MF_00080">
    <property type="entry name" value="IF_3"/>
    <property type="match status" value="1"/>
</dbReference>
<dbReference type="InterPro" id="IPR036788">
    <property type="entry name" value="T_IF-3_C_sf"/>
</dbReference>
<dbReference type="InterPro" id="IPR036787">
    <property type="entry name" value="T_IF-3_N_sf"/>
</dbReference>
<dbReference type="InterPro" id="IPR019813">
    <property type="entry name" value="Translation_initiation_fac3_CS"/>
</dbReference>
<dbReference type="InterPro" id="IPR001288">
    <property type="entry name" value="Translation_initiation_fac_3"/>
</dbReference>
<dbReference type="InterPro" id="IPR019815">
    <property type="entry name" value="Translation_initiation_fac_3_C"/>
</dbReference>
<dbReference type="InterPro" id="IPR019814">
    <property type="entry name" value="Translation_initiation_fac_3_N"/>
</dbReference>
<dbReference type="NCBIfam" id="TIGR00168">
    <property type="entry name" value="infC"/>
    <property type="match status" value="1"/>
</dbReference>
<dbReference type="PANTHER" id="PTHR10938">
    <property type="entry name" value="TRANSLATION INITIATION FACTOR IF-3"/>
    <property type="match status" value="1"/>
</dbReference>
<dbReference type="PANTHER" id="PTHR10938:SF0">
    <property type="entry name" value="TRANSLATION INITIATION FACTOR IF-3, MITOCHONDRIAL"/>
    <property type="match status" value="1"/>
</dbReference>
<dbReference type="Pfam" id="PF00707">
    <property type="entry name" value="IF3_C"/>
    <property type="match status" value="1"/>
</dbReference>
<dbReference type="Pfam" id="PF05198">
    <property type="entry name" value="IF3_N"/>
    <property type="match status" value="1"/>
</dbReference>
<dbReference type="SUPFAM" id="SSF55200">
    <property type="entry name" value="Translation initiation factor IF3, C-terminal domain"/>
    <property type="match status" value="1"/>
</dbReference>
<dbReference type="SUPFAM" id="SSF54364">
    <property type="entry name" value="Translation initiation factor IF3, N-terminal domain"/>
    <property type="match status" value="1"/>
</dbReference>
<dbReference type="PROSITE" id="PS00938">
    <property type="entry name" value="IF3"/>
    <property type="match status" value="1"/>
</dbReference>
<evidence type="ECO:0000255" key="1">
    <source>
        <dbReference type="HAMAP-Rule" id="MF_00080"/>
    </source>
</evidence>
<name>IF3_BUCAT</name>
<accession>B8D731</accession>
<proteinExistence type="inferred from homology"/>
<sequence>MKGGKRVQLTRPNRINSEIRAIKVRLTGVEGDQIGIVNLREALKKSEELGLDLVEISPNAEPPVCRIMDYGKFLYEKSKSSKEQKKKQKVIHIKEIKFRPGTDEGDYQVKLRNLIRFLEDGDKAKITLRFRGREMAHQKIGVDVLNRVKNDLIELATVEYFPSKIEGRQMIMILAPKKK</sequence>
<keyword id="KW-0963">Cytoplasm</keyword>
<keyword id="KW-0396">Initiation factor</keyword>
<keyword id="KW-0648">Protein biosynthesis</keyword>
<organism>
    <name type="scientific">Buchnera aphidicola subsp. Acyrthosiphon pisum (strain Tuc7)</name>
    <dbReference type="NCBI Taxonomy" id="561501"/>
    <lineage>
        <taxon>Bacteria</taxon>
        <taxon>Pseudomonadati</taxon>
        <taxon>Pseudomonadota</taxon>
        <taxon>Gammaproteobacteria</taxon>
        <taxon>Enterobacterales</taxon>
        <taxon>Erwiniaceae</taxon>
        <taxon>Buchnera</taxon>
    </lineage>
</organism>